<organism>
    <name type="scientific">Shewanella woodyi (strain ATCC 51908 / MS32)</name>
    <dbReference type="NCBI Taxonomy" id="392500"/>
    <lineage>
        <taxon>Bacteria</taxon>
        <taxon>Pseudomonadati</taxon>
        <taxon>Pseudomonadota</taxon>
        <taxon>Gammaproteobacteria</taxon>
        <taxon>Alteromonadales</taxon>
        <taxon>Shewanellaceae</taxon>
        <taxon>Shewanella</taxon>
    </lineage>
</organism>
<reference key="1">
    <citation type="submission" date="2008-02" db="EMBL/GenBank/DDBJ databases">
        <title>Complete sequence of Shewanella woodyi ATCC 51908.</title>
        <authorList>
            <consortium name="US DOE Joint Genome Institute"/>
            <person name="Copeland A."/>
            <person name="Lucas S."/>
            <person name="Lapidus A."/>
            <person name="Glavina del Rio T."/>
            <person name="Dalin E."/>
            <person name="Tice H."/>
            <person name="Bruce D."/>
            <person name="Goodwin L."/>
            <person name="Pitluck S."/>
            <person name="Sims D."/>
            <person name="Brettin T."/>
            <person name="Detter J.C."/>
            <person name="Han C."/>
            <person name="Kuske C.R."/>
            <person name="Schmutz J."/>
            <person name="Larimer F."/>
            <person name="Land M."/>
            <person name="Hauser L."/>
            <person name="Kyrpides N."/>
            <person name="Lykidis A."/>
            <person name="Zhao J.-S."/>
            <person name="Richardson P."/>
        </authorList>
    </citation>
    <scope>NUCLEOTIDE SEQUENCE [LARGE SCALE GENOMIC DNA]</scope>
    <source>
        <strain>ATCC 51908 / MS32</strain>
    </source>
</reference>
<accession>B1KJ42</accession>
<comment type="similarity">
    <text evidence="1">Belongs to the UPF0352 family.</text>
</comment>
<evidence type="ECO:0000255" key="1">
    <source>
        <dbReference type="HAMAP-Rule" id="MF_00816"/>
    </source>
</evidence>
<name>Y2786_SHEWM</name>
<sequence length="71" mass="7613">MAIQSKYSNTQVESIIAELSAVLDKHQAPTDLRLMVLGNCVTDLLARKVPAEARASVAEQFSKALAQSVKG</sequence>
<proteinExistence type="inferred from homology"/>
<feature type="chain" id="PRO_1000199602" description="UPF0352 protein Swoo_2786">
    <location>
        <begin position="1"/>
        <end position="71"/>
    </location>
</feature>
<keyword id="KW-1185">Reference proteome</keyword>
<dbReference type="EMBL" id="CP000961">
    <property type="protein sequence ID" value="ACA87062.1"/>
    <property type="molecule type" value="Genomic_DNA"/>
</dbReference>
<dbReference type="RefSeq" id="WP_012325398.1">
    <property type="nucleotide sequence ID" value="NC_010506.1"/>
</dbReference>
<dbReference type="SMR" id="B1KJ42"/>
<dbReference type="STRING" id="392500.Swoo_2786"/>
<dbReference type="KEGG" id="swd:Swoo_2786"/>
<dbReference type="eggNOG" id="COG3082">
    <property type="taxonomic scope" value="Bacteria"/>
</dbReference>
<dbReference type="HOGENOM" id="CLU_175457_0_0_6"/>
<dbReference type="Proteomes" id="UP000002168">
    <property type="component" value="Chromosome"/>
</dbReference>
<dbReference type="Gene3D" id="1.10.3390.10">
    <property type="entry name" value="YejL-like"/>
    <property type="match status" value="1"/>
</dbReference>
<dbReference type="HAMAP" id="MF_00816">
    <property type="entry name" value="UPF0352"/>
    <property type="match status" value="1"/>
</dbReference>
<dbReference type="InterPro" id="IPR009857">
    <property type="entry name" value="UPF0352"/>
</dbReference>
<dbReference type="InterPro" id="IPR023202">
    <property type="entry name" value="YejL_sf"/>
</dbReference>
<dbReference type="NCBIfam" id="NF010242">
    <property type="entry name" value="PRK13689.1"/>
    <property type="match status" value="1"/>
</dbReference>
<dbReference type="Pfam" id="PF07208">
    <property type="entry name" value="DUF1414"/>
    <property type="match status" value="1"/>
</dbReference>
<dbReference type="PIRSF" id="PIRSF006188">
    <property type="entry name" value="UCP006188"/>
    <property type="match status" value="1"/>
</dbReference>
<dbReference type="SUPFAM" id="SSF158651">
    <property type="entry name" value="YejL-like"/>
    <property type="match status" value="1"/>
</dbReference>
<gene>
    <name type="ordered locus">Swoo_2786</name>
</gene>
<protein>
    <recommendedName>
        <fullName evidence="1">UPF0352 protein Swoo_2786</fullName>
    </recommendedName>
</protein>